<comment type="subunit">
    <text>MCR is composed of three subunits: alpha, beta, and gamma. The function of proteins C and D is not known.</text>
</comment>
<protein>
    <recommendedName>
        <fullName>Methyl-coenzyme M reductase operon protein C</fullName>
    </recommendedName>
</protein>
<dbReference type="EMBL" id="Y00158">
    <property type="protein sequence ID" value="CAA68355.1"/>
    <property type="molecule type" value="Genomic_DNA"/>
</dbReference>
<dbReference type="EMBL" id="CP000099">
    <property type="protein sequence ID" value="AAZ69869.1"/>
    <property type="molecule type" value="Genomic_DNA"/>
</dbReference>
<dbReference type="PIR" id="C29525">
    <property type="entry name" value="C29525"/>
</dbReference>
<dbReference type="SMR" id="P07959"/>
<dbReference type="STRING" id="269797.Mbar_A0895"/>
<dbReference type="PaxDb" id="269797-Mbar_A0895"/>
<dbReference type="GeneID" id="24821495"/>
<dbReference type="KEGG" id="mba:Mbar_A0895"/>
<dbReference type="eggNOG" id="arCOG03225">
    <property type="taxonomic scope" value="Archaea"/>
</dbReference>
<dbReference type="HOGENOM" id="CLU_099719_0_0_2"/>
<dbReference type="OrthoDB" id="113954at2157"/>
<dbReference type="GO" id="GO:0015948">
    <property type="term" value="P:methanogenesis"/>
    <property type="evidence" value="ECO:0007669"/>
    <property type="project" value="UniProtKB-KW"/>
</dbReference>
<dbReference type="InterPro" id="IPR007687">
    <property type="entry name" value="Me_CoM_Rdtase_prot-C"/>
</dbReference>
<dbReference type="InterPro" id="IPR026327">
    <property type="entry name" value="Me_CoM_Rdtase_prot-C-like"/>
</dbReference>
<dbReference type="NCBIfam" id="TIGR03264">
    <property type="entry name" value="met_CoM_red_C"/>
    <property type="match status" value="1"/>
</dbReference>
<dbReference type="Pfam" id="PF04609">
    <property type="entry name" value="MCR_C"/>
    <property type="match status" value="1"/>
</dbReference>
<dbReference type="PIRSF" id="PIRSF003137">
    <property type="entry name" value="McrC"/>
    <property type="match status" value="1"/>
</dbReference>
<gene>
    <name type="primary">mcrC</name>
    <name type="ordered locus">Mbar_A0895</name>
</gene>
<reference key="1">
    <citation type="journal article" date="1987" name="Nucleic Acids Res.">
        <title>Nucleotide sequence of the methyl coenzyme M reductase gene cluster from Methanosarcina barkeri.</title>
        <authorList>
            <person name="Bokranz M."/>
            <person name="Klein A."/>
        </authorList>
    </citation>
    <scope>NUCLEOTIDE SEQUENCE [GENOMIC DNA]</scope>
</reference>
<reference key="2">
    <citation type="journal article" date="2006" name="J. Bacteriol.">
        <title>The Methanosarcina barkeri genome: comparative analysis with Methanosarcina acetivorans and Methanosarcina mazei reveals extensive rearrangement within methanosarcinal genomes.</title>
        <authorList>
            <person name="Maeder D.L."/>
            <person name="Anderson I."/>
            <person name="Brettin T.S."/>
            <person name="Bruce D.C."/>
            <person name="Gilna P."/>
            <person name="Han C.S."/>
            <person name="Lapidus A."/>
            <person name="Metcalf W.W."/>
            <person name="Saunders E."/>
            <person name="Tapia R."/>
            <person name="Sowers K.R."/>
        </authorList>
    </citation>
    <scope>NUCLEOTIDE SEQUENCE [LARGE SCALE GENOMIC DNA]</scope>
    <source>
        <strain>Fusaro / DSM 804</strain>
    </source>
</reference>
<organism>
    <name type="scientific">Methanosarcina barkeri (strain Fusaro / DSM 804)</name>
    <dbReference type="NCBI Taxonomy" id="269797"/>
    <lineage>
        <taxon>Archaea</taxon>
        <taxon>Methanobacteriati</taxon>
        <taxon>Methanobacteriota</taxon>
        <taxon>Stenosarchaea group</taxon>
        <taxon>Methanomicrobia</taxon>
        <taxon>Methanosarcinales</taxon>
        <taxon>Methanosarcinaceae</taxon>
        <taxon>Methanosarcina</taxon>
    </lineage>
</organism>
<name>MCRC_METBF</name>
<keyword id="KW-0484">Methanogenesis</keyword>
<sequence>MMIDRETQVVDCRCGAGLGKGGGLAQRGTLSEAGRAEVVAIAMSPGQRHITKPVCEITYGMRKENIQVSVLVLYSGSGIPESGMRTGSFVLSPVEVAQIEMHKLAVIHLGNIKDHVVRKTREILSQANIPAIVVSQIPVDFEDFAEAGIKTRLVMPRDEDIRTKGIVMDMVSGVTRGDSCPRDKLNLIIKYVKTTLDQLEDHKGVA</sequence>
<accession>P07959</accession>
<accession>Q46E23</accession>
<proteinExistence type="predicted"/>
<feature type="chain" id="PRO_0000147485" description="Methyl-coenzyme M reductase operon protein C">
    <location>
        <begin position="1"/>
        <end position="206"/>
    </location>
</feature>